<dbReference type="EMBL" id="CP001612">
    <property type="protein sequence ID" value="ACP53607.1"/>
    <property type="molecule type" value="Genomic_DNA"/>
</dbReference>
<dbReference type="RefSeq" id="WP_012719804.1">
    <property type="nucleotide sequence ID" value="NC_012633.1"/>
</dbReference>
<dbReference type="SMR" id="C3PNU7"/>
<dbReference type="KEGG" id="raf:RAF_ORF0717"/>
<dbReference type="HOGENOM" id="CLU_062974_2_2_5"/>
<dbReference type="Proteomes" id="UP000002305">
    <property type="component" value="Chromosome"/>
</dbReference>
<dbReference type="GO" id="GO:0005737">
    <property type="term" value="C:cytoplasm"/>
    <property type="evidence" value="ECO:0007669"/>
    <property type="project" value="UniProtKB-SubCell"/>
</dbReference>
<dbReference type="GO" id="GO:0003677">
    <property type="term" value="F:DNA binding"/>
    <property type="evidence" value="ECO:0007669"/>
    <property type="project" value="UniProtKB-UniRule"/>
</dbReference>
<dbReference type="GO" id="GO:0006355">
    <property type="term" value="P:regulation of DNA-templated transcription"/>
    <property type="evidence" value="ECO:0007669"/>
    <property type="project" value="UniProtKB-UniRule"/>
</dbReference>
<dbReference type="FunFam" id="1.10.10.200:FF:000002">
    <property type="entry name" value="Probable transcriptional regulatory protein CLM62_37755"/>
    <property type="match status" value="1"/>
</dbReference>
<dbReference type="Gene3D" id="1.10.10.200">
    <property type="match status" value="1"/>
</dbReference>
<dbReference type="Gene3D" id="3.30.70.980">
    <property type="match status" value="2"/>
</dbReference>
<dbReference type="HAMAP" id="MF_00693">
    <property type="entry name" value="Transcrip_reg_TACO1"/>
    <property type="match status" value="1"/>
</dbReference>
<dbReference type="InterPro" id="IPR017856">
    <property type="entry name" value="Integrase-like_N"/>
</dbReference>
<dbReference type="InterPro" id="IPR048300">
    <property type="entry name" value="TACO1_YebC-like_2nd/3rd_dom"/>
</dbReference>
<dbReference type="InterPro" id="IPR049083">
    <property type="entry name" value="TACO1_YebC_N"/>
</dbReference>
<dbReference type="InterPro" id="IPR002876">
    <property type="entry name" value="Transcrip_reg_TACO1-like"/>
</dbReference>
<dbReference type="InterPro" id="IPR026564">
    <property type="entry name" value="Transcrip_reg_TACO1-like_dom3"/>
</dbReference>
<dbReference type="InterPro" id="IPR029072">
    <property type="entry name" value="YebC-like"/>
</dbReference>
<dbReference type="NCBIfam" id="NF001030">
    <property type="entry name" value="PRK00110.1"/>
    <property type="match status" value="1"/>
</dbReference>
<dbReference type="NCBIfam" id="NF009044">
    <property type="entry name" value="PRK12378.1"/>
    <property type="match status" value="1"/>
</dbReference>
<dbReference type="NCBIfam" id="TIGR01033">
    <property type="entry name" value="YebC/PmpR family DNA-binding transcriptional regulator"/>
    <property type="match status" value="1"/>
</dbReference>
<dbReference type="PANTHER" id="PTHR12532:SF11">
    <property type="match status" value="1"/>
</dbReference>
<dbReference type="PANTHER" id="PTHR12532">
    <property type="entry name" value="TRANSLATIONAL ACTIVATOR OF CYTOCHROME C OXIDASE 1"/>
    <property type="match status" value="1"/>
</dbReference>
<dbReference type="Pfam" id="PF20772">
    <property type="entry name" value="TACO1_YebC_N"/>
    <property type="match status" value="1"/>
</dbReference>
<dbReference type="Pfam" id="PF01709">
    <property type="entry name" value="Transcrip_reg"/>
    <property type="match status" value="1"/>
</dbReference>
<dbReference type="SUPFAM" id="SSF75625">
    <property type="entry name" value="YebC-like"/>
    <property type="match status" value="1"/>
</dbReference>
<name>Y717_RICAE</name>
<accession>C3PNU7</accession>
<keyword id="KW-0963">Cytoplasm</keyword>
<keyword id="KW-0238">DNA-binding</keyword>
<keyword id="KW-0804">Transcription</keyword>
<keyword id="KW-0805">Transcription regulation</keyword>
<evidence type="ECO:0000255" key="1">
    <source>
        <dbReference type="HAMAP-Rule" id="MF_00693"/>
    </source>
</evidence>
<evidence type="ECO:0000256" key="2">
    <source>
        <dbReference type="SAM" id="MobiDB-lite"/>
    </source>
</evidence>
<proteinExistence type="inferred from homology"/>
<protein>
    <recommendedName>
        <fullName evidence="1">Probable transcriptional regulatory protein RAF_ORF0717</fullName>
    </recommendedName>
</protein>
<organism>
    <name type="scientific">Rickettsia africae (strain ESF-5)</name>
    <dbReference type="NCBI Taxonomy" id="347255"/>
    <lineage>
        <taxon>Bacteria</taxon>
        <taxon>Pseudomonadati</taxon>
        <taxon>Pseudomonadota</taxon>
        <taxon>Alphaproteobacteria</taxon>
        <taxon>Rickettsiales</taxon>
        <taxon>Rickettsiaceae</taxon>
        <taxon>Rickettsieae</taxon>
        <taxon>Rickettsia</taxon>
        <taxon>spotted fever group</taxon>
    </lineage>
</organism>
<reference key="1">
    <citation type="journal article" date="2009" name="BMC Genomics">
        <title>Analysis of the Rickettsia africae genome reveals that virulence acquisition in Rickettsia species may be explained by genome reduction.</title>
        <authorList>
            <person name="Fournier P.-E."/>
            <person name="El Karkouri K."/>
            <person name="Leroy Q."/>
            <person name="Robert C."/>
            <person name="Giumelli B."/>
            <person name="Renesto P."/>
            <person name="Socolovschi C."/>
            <person name="Parola P."/>
            <person name="Audic S."/>
            <person name="Raoult D."/>
        </authorList>
    </citation>
    <scope>NUCLEOTIDE SEQUENCE [LARGE SCALE GENOMIC DNA]</scope>
    <source>
        <strain>ESF-5</strain>
    </source>
</reference>
<sequence length="253" mass="28156">MAGHSKFKNIQHRKGAQDKKRAKVFTKLIREIVTAAKTGSSNNPENNPRLRNALTAARSQNLPKERIDKAINSANDSSNNENYTEIRYEGYAPNGIAIIVEVLTDNKNRTAAEVRSSFTKYGGSLGETGSVNYLFNHCGVIQYPINIASNEDVLEAVIEAGGHDIISDDTTHTIYTDIENFSKVLAFLTGKYGIPEDSYIGWIPLNTIIIDDKEKAEKLLKLVEVLEESDDVQRVFGNYELSDDVYEIIQGEP</sequence>
<comment type="subcellular location">
    <subcellularLocation>
        <location evidence="1">Cytoplasm</location>
    </subcellularLocation>
</comment>
<comment type="similarity">
    <text evidence="1">Belongs to the TACO1 family.</text>
</comment>
<gene>
    <name type="ordered locus">RAF_ORF0717</name>
</gene>
<feature type="chain" id="PRO_1000212619" description="Probable transcriptional regulatory protein RAF_ORF0717">
    <location>
        <begin position="1"/>
        <end position="253"/>
    </location>
</feature>
<feature type="region of interest" description="Disordered" evidence="2">
    <location>
        <begin position="1"/>
        <end position="21"/>
    </location>
</feature>